<protein>
    <recommendedName>
        <fullName>GTP-binding nuclear protein Ran/TC4</fullName>
    </recommendedName>
</protein>
<dbReference type="EMBL" id="Z24678">
    <property type="protein sequence ID" value="CAA80845.1"/>
    <property type="molecule type" value="mRNA"/>
</dbReference>
<dbReference type="PIR" id="S46498">
    <property type="entry name" value="S46498"/>
</dbReference>
<dbReference type="SMR" id="P38548"/>
<dbReference type="EnsemblPlants" id="Vfaba.Hedin2.R1.2g186280.1">
    <property type="protein sequence ID" value="cds:Vfaba.Hedin2.R1.2g186280.1"/>
    <property type="gene ID" value="Vfaba.Hedin2.R1.2g186280"/>
</dbReference>
<dbReference type="Gramene" id="Vfaba.Hedin2.R1.2g186280.1">
    <property type="protein sequence ID" value="cds:Vfaba.Hedin2.R1.2g186280.1"/>
    <property type="gene ID" value="Vfaba.Hedin2.R1.2g186280"/>
</dbReference>
<dbReference type="OrthoDB" id="2012850at2759"/>
<dbReference type="GO" id="GO:0005737">
    <property type="term" value="C:cytoplasm"/>
    <property type="evidence" value="ECO:0007669"/>
    <property type="project" value="TreeGrafter"/>
</dbReference>
<dbReference type="GO" id="GO:0005634">
    <property type="term" value="C:nucleus"/>
    <property type="evidence" value="ECO:0007669"/>
    <property type="project" value="UniProtKB-SubCell"/>
</dbReference>
<dbReference type="GO" id="GO:0005525">
    <property type="term" value="F:GTP binding"/>
    <property type="evidence" value="ECO:0007669"/>
    <property type="project" value="UniProtKB-KW"/>
</dbReference>
<dbReference type="GO" id="GO:0003924">
    <property type="term" value="F:GTPase activity"/>
    <property type="evidence" value="ECO:0007669"/>
    <property type="project" value="InterPro"/>
</dbReference>
<dbReference type="GO" id="GO:0006606">
    <property type="term" value="P:protein import into nucleus"/>
    <property type="evidence" value="ECO:0007669"/>
    <property type="project" value="TreeGrafter"/>
</dbReference>
<dbReference type="GO" id="GO:0000054">
    <property type="term" value="P:ribosomal subunit export from nucleus"/>
    <property type="evidence" value="ECO:0007669"/>
    <property type="project" value="TreeGrafter"/>
</dbReference>
<dbReference type="CDD" id="cd00877">
    <property type="entry name" value="Ran"/>
    <property type="match status" value="1"/>
</dbReference>
<dbReference type="FunFam" id="3.40.50.300:FF:000369">
    <property type="entry name" value="GTP-binding nuclear protein"/>
    <property type="match status" value="1"/>
</dbReference>
<dbReference type="Gene3D" id="3.40.50.300">
    <property type="entry name" value="P-loop containing nucleotide triphosphate hydrolases"/>
    <property type="match status" value="1"/>
</dbReference>
<dbReference type="InterPro" id="IPR027417">
    <property type="entry name" value="P-loop_NTPase"/>
</dbReference>
<dbReference type="InterPro" id="IPR002041">
    <property type="entry name" value="Ran_GTPase"/>
</dbReference>
<dbReference type="InterPro" id="IPR005225">
    <property type="entry name" value="Small_GTP-bd"/>
</dbReference>
<dbReference type="InterPro" id="IPR001806">
    <property type="entry name" value="Small_GTPase"/>
</dbReference>
<dbReference type="NCBIfam" id="TIGR00231">
    <property type="entry name" value="small_GTP"/>
    <property type="match status" value="1"/>
</dbReference>
<dbReference type="PANTHER" id="PTHR24071:SF39">
    <property type="entry name" value="GTP-BINDING NUCLEAR PROTEIN RAN-3"/>
    <property type="match status" value="1"/>
</dbReference>
<dbReference type="PANTHER" id="PTHR24071">
    <property type="entry name" value="RAN GTPASE"/>
    <property type="match status" value="1"/>
</dbReference>
<dbReference type="Pfam" id="PF00071">
    <property type="entry name" value="Ras"/>
    <property type="match status" value="1"/>
</dbReference>
<dbReference type="PRINTS" id="PR00627">
    <property type="entry name" value="GTPRANTC4"/>
</dbReference>
<dbReference type="SMART" id="SM00175">
    <property type="entry name" value="RAB"/>
    <property type="match status" value="1"/>
</dbReference>
<dbReference type="SMART" id="SM00176">
    <property type="entry name" value="RAN"/>
    <property type="match status" value="1"/>
</dbReference>
<dbReference type="SMART" id="SM00173">
    <property type="entry name" value="RAS"/>
    <property type="match status" value="1"/>
</dbReference>
<dbReference type="SMART" id="SM00174">
    <property type="entry name" value="RHO"/>
    <property type="match status" value="1"/>
</dbReference>
<dbReference type="SUPFAM" id="SSF52540">
    <property type="entry name" value="P-loop containing nucleoside triphosphate hydrolases"/>
    <property type="match status" value="1"/>
</dbReference>
<dbReference type="PROSITE" id="PS51418">
    <property type="entry name" value="RAN"/>
    <property type="match status" value="1"/>
</dbReference>
<comment type="function">
    <text evidence="1">GTP-binding protein involved in nucleocytoplasmic transport. Required for the import of protein into the nucleus and also for RNA export. Involved in chromatin condensation and control of cell cycle (By similarity).</text>
</comment>
<comment type="subunit">
    <text evidence="2">Found in a nuclear export complex with RanGTP, exportin and pre-miRNA (By similarity).</text>
</comment>
<comment type="subcellular location">
    <subcellularLocation>
        <location evidence="1">Nucleus</location>
    </subcellularLocation>
</comment>
<comment type="similarity">
    <text evidence="3 4">Belongs to the small GTPase superfamily. Ran family.</text>
</comment>
<feature type="chain" id="PRO_0000208727" description="GTP-binding nuclear protein Ran/TC4">
    <location>
        <begin position="1"/>
        <end position="221"/>
    </location>
</feature>
<feature type="domain" description="Small GTPase Ran-type" evidence="3">
    <location>
        <begin position="10"/>
        <end position="174"/>
    </location>
</feature>
<feature type="region of interest" description="Switch-I" evidence="3">
    <location>
        <begin position="40"/>
        <end position="48"/>
    </location>
</feature>
<feature type="region of interest" description="Switch-II" evidence="3">
    <location>
        <begin position="71"/>
        <end position="87"/>
    </location>
</feature>
<feature type="binding site" evidence="2">
    <location>
        <begin position="21"/>
        <end position="28"/>
    </location>
    <ligand>
        <name>GTP</name>
        <dbReference type="ChEBI" id="CHEBI:37565"/>
    </ligand>
</feature>
<feature type="binding site" evidence="2">
    <location>
        <position position="71"/>
    </location>
    <ligand>
        <name>GTP</name>
        <dbReference type="ChEBI" id="CHEBI:37565"/>
    </ligand>
</feature>
<feature type="binding site" evidence="2">
    <location>
        <begin position="125"/>
        <end position="128"/>
    </location>
    <ligand>
        <name>GTP</name>
        <dbReference type="ChEBI" id="CHEBI:37565"/>
    </ligand>
</feature>
<feature type="binding site" evidence="2">
    <location>
        <begin position="153"/>
        <end position="155"/>
    </location>
    <ligand>
        <name>GTP</name>
        <dbReference type="ChEBI" id="CHEBI:37565"/>
    </ligand>
</feature>
<sequence>MALPNQQTVDYPSFKLVIVGDGGTGKTTFVKRHLTGEFEKKYEPTIGVEVHPLDFFTNCGKIRFYCWDTAGQEKFGGLRDGYYIHGQCAIIMFDVTARLTYKNVPTWHRDLCRVCENIPIVLCGNKVDVKNRQVKAKQVTFHRKKNLQYYEISAKSNYNFEKPFLYLARKLAGDANLHFVESPALAPPEVQIDIALQQRHENEILEAANQPLPDDDDDAFE</sequence>
<reference key="1">
    <citation type="journal article" date="1994" name="Plant Mol. Biol.">
        <title>Sequence of a plant cDNA from Vicia faba encoding a novel Ran-related GTP-binding protein.</title>
        <authorList>
            <person name="Saalbach G."/>
            <person name="Christov V."/>
        </authorList>
    </citation>
    <scope>NUCLEOTIDE SEQUENCE [MRNA]</scope>
    <source>
        <tissue>Cotyledon</tissue>
    </source>
</reference>
<proteinExistence type="evidence at transcript level"/>
<evidence type="ECO:0000250" key="1"/>
<evidence type="ECO:0000250" key="2">
    <source>
        <dbReference type="UniProtKB" id="P62825"/>
    </source>
</evidence>
<evidence type="ECO:0000255" key="3">
    <source>
        <dbReference type="PROSITE-ProRule" id="PRU00752"/>
    </source>
</evidence>
<evidence type="ECO:0000305" key="4"/>
<name>RAN_VICFA</name>
<organism>
    <name type="scientific">Vicia faba</name>
    <name type="common">Broad bean</name>
    <name type="synonym">Faba vulgaris</name>
    <dbReference type="NCBI Taxonomy" id="3906"/>
    <lineage>
        <taxon>Eukaryota</taxon>
        <taxon>Viridiplantae</taxon>
        <taxon>Streptophyta</taxon>
        <taxon>Embryophyta</taxon>
        <taxon>Tracheophyta</taxon>
        <taxon>Spermatophyta</taxon>
        <taxon>Magnoliopsida</taxon>
        <taxon>eudicotyledons</taxon>
        <taxon>Gunneridae</taxon>
        <taxon>Pentapetalae</taxon>
        <taxon>rosids</taxon>
        <taxon>fabids</taxon>
        <taxon>Fabales</taxon>
        <taxon>Fabaceae</taxon>
        <taxon>Papilionoideae</taxon>
        <taxon>50 kb inversion clade</taxon>
        <taxon>NPAAA clade</taxon>
        <taxon>Hologalegina</taxon>
        <taxon>IRL clade</taxon>
        <taxon>Fabeae</taxon>
        <taxon>Vicia</taxon>
    </lineage>
</organism>
<keyword id="KW-0342">GTP-binding</keyword>
<keyword id="KW-0547">Nucleotide-binding</keyword>
<keyword id="KW-0539">Nucleus</keyword>
<keyword id="KW-0653">Protein transport</keyword>
<keyword id="KW-0813">Transport</keyword>
<accession>P38548</accession>